<evidence type="ECO:0000250" key="1">
    <source>
        <dbReference type="UniProtKB" id="P26394"/>
    </source>
</evidence>
<evidence type="ECO:0000250" key="2">
    <source>
        <dbReference type="UniProtKB" id="Q5SFD1"/>
    </source>
</evidence>
<evidence type="ECO:0000250" key="3">
    <source>
        <dbReference type="UniProtKB" id="Q9HU21"/>
    </source>
</evidence>
<evidence type="ECO:0000305" key="4"/>
<name>RMLC_NEIGO</name>
<gene>
    <name type="primary">rfbC</name>
    <name type="synonym">rmlC</name>
</gene>
<accession>P37763</accession>
<feature type="chain" id="PRO_0000207981" description="dTDP-4-dehydrorhamnose 3,5-epimerase">
    <location>
        <begin position="1"/>
        <end position="328"/>
    </location>
</feature>
<feature type="active site" description="Proton acceptor" evidence="3">
    <location>
        <position position="61"/>
    </location>
</feature>
<feature type="active site" description="Proton donor" evidence="3">
    <location>
        <position position="130"/>
    </location>
</feature>
<feature type="binding site" evidence="3">
    <location>
        <position position="23"/>
    </location>
    <ligand>
        <name>substrate</name>
    </ligand>
</feature>
<feature type="binding site" evidence="3">
    <location>
        <position position="28"/>
    </location>
    <ligand>
        <name>substrate</name>
    </ligand>
</feature>
<feature type="binding site" evidence="3">
    <location>
        <begin position="46"/>
        <end position="48"/>
    </location>
    <ligand>
        <name>substrate</name>
    </ligand>
</feature>
<feature type="binding site" evidence="3">
    <location>
        <position position="58"/>
    </location>
    <ligand>
        <name>substrate</name>
    </ligand>
</feature>
<feature type="binding site" evidence="3">
    <location>
        <position position="70"/>
    </location>
    <ligand>
        <name>substrate</name>
    </ligand>
</feature>
<feature type="binding site" evidence="3">
    <location>
        <position position="117"/>
    </location>
    <ligand>
        <name>substrate</name>
    </ligand>
</feature>
<feature type="binding site" evidence="3">
    <location>
        <position position="141"/>
    </location>
    <ligand>
        <name>substrate</name>
    </ligand>
</feature>
<feature type="binding site" evidence="3">
    <location>
        <position position="166"/>
    </location>
    <ligand>
        <name>substrate</name>
    </ligand>
</feature>
<feature type="site" description="Participates in a stacking interaction with the thymidine ring of dTDP-4-oxo-6-deoxyglucose" evidence="2">
    <location>
        <position position="136"/>
    </location>
</feature>
<organism>
    <name type="scientific">Neisseria gonorrhoeae</name>
    <dbReference type="NCBI Taxonomy" id="485"/>
    <lineage>
        <taxon>Bacteria</taxon>
        <taxon>Pseudomonadati</taxon>
        <taxon>Pseudomonadota</taxon>
        <taxon>Betaproteobacteria</taxon>
        <taxon>Neisseriales</taxon>
        <taxon>Neisseriaceae</taxon>
        <taxon>Neisseria</taxon>
    </lineage>
</organism>
<sequence>MDIIDTALPDVKLLKPQVFTDGRGFFMETFRDGWFKENIADRTFVQENHSNSSKGVLRGLHYQTENTQGKLVRVVVGEVFDVAVDMREGSPTFGKWAGATLSAQNRYQLWIPEGFAHGFCVLGDAAEVVYKCTDYYNPETEQVLIWNDPAIGIGWPLQTAPLLSPKDLAGKTWAQAEKSALRFPDKKCRPNVSDGIFSDRLPTRLQYALCKEKHPGNEERQAQPRSGGIPVLQIQRERRIRAAVGHREGNNKRHNYTNQAFTDNQACREKRTDTVGVFQTAFAVFRLLANDVFQHRRQHRACHDGHIDGRRQINAHTDRKDGQGKFTA</sequence>
<keyword id="KW-0119">Carbohydrate metabolism</keyword>
<keyword id="KW-0413">Isomerase</keyword>
<keyword id="KW-0448">Lipopolysaccharide biosynthesis</keyword>
<comment type="function">
    <text evidence="1">Catalyzes the epimerization of the C3' and C5'positions of dTDP-6-deoxy-D-xylo-4-hexulose, forming dTDP-6-deoxy-L-lyxo-4-hexulose.</text>
</comment>
<comment type="catalytic activity">
    <reaction evidence="1">
        <text>dTDP-4-dehydro-6-deoxy-alpha-D-glucose = dTDP-4-dehydro-beta-L-rhamnose</text>
        <dbReference type="Rhea" id="RHEA:16969"/>
        <dbReference type="ChEBI" id="CHEBI:57649"/>
        <dbReference type="ChEBI" id="CHEBI:62830"/>
        <dbReference type="EC" id="5.1.3.13"/>
    </reaction>
</comment>
<comment type="pathway">
    <text evidence="1">Carbohydrate biosynthesis; dTDP-L-rhamnose biosynthesis.</text>
</comment>
<comment type="pathway">
    <text evidence="1">Bacterial outer membrane biogenesis; LPS O-antigen biosynthesis.</text>
</comment>
<comment type="subunit">
    <text evidence="1">Homodimer.</text>
</comment>
<comment type="similarity">
    <text evidence="4">Belongs to the dTDP-4-dehydrorhamnose 3,5-epimerase family.</text>
</comment>
<reference key="1">
    <citation type="journal article" date="1994" name="J. Bacteriol.">
        <title>The identification of cryptic rhamnose biosynthesis genes in Neisseria gonorrhoeae and their relationship to lipopolysaccharide biosynthesis.</title>
        <authorList>
            <person name="Robertson B.D."/>
            <person name="Frosch M."/>
            <person name="van Putten J.P.M."/>
        </authorList>
    </citation>
    <scope>NUCLEOTIDE SEQUENCE [GENOMIC DNA]</scope>
    <source>
        <strain>MS11</strain>
    </source>
</reference>
<reference key="2">
    <citation type="journal article" date="1996" name="J. Bacteriol.">
        <title>Genes associated with meningococcal capsule complex are also found in Neisseria gonorrhoeae.</title>
        <authorList>
            <person name="Petering H."/>
            <person name="Hammerschmidt S."/>
            <person name="Frosch M."/>
            <person name="van Putten J.P.M."/>
            <person name="Ison C.A."/>
            <person name="Robertson B.D."/>
        </authorList>
    </citation>
    <scope>NUCLEOTIDE SEQUENCE [GENOMIC DNA]</scope>
    <source>
        <strain>MS11</strain>
    </source>
</reference>
<proteinExistence type="inferred from homology"/>
<protein>
    <recommendedName>
        <fullName evidence="1">dTDP-4-dehydrorhamnose 3,5-epimerase</fullName>
        <ecNumber evidence="1">5.1.3.13</ecNumber>
    </recommendedName>
    <alternativeName>
        <fullName evidence="1">Thymidine diphospho-4-keto-rhamnose 3,5-epimerase</fullName>
    </alternativeName>
    <alternativeName>
        <fullName evidence="1">dTDP-4-keto-6-deoxyglucose 3,5-epimerase</fullName>
    </alternativeName>
    <alternativeName>
        <fullName evidence="1">dTDP-6-deoxy-D-xylo-4-hexulose 3,5-epimerase</fullName>
    </alternativeName>
    <alternativeName>
        <fullName evidence="1">dTDP-L-rhamnose synthase</fullName>
    </alternativeName>
</protein>
<dbReference type="EC" id="5.1.3.13" evidence="1"/>
<dbReference type="EMBL" id="Z32742">
    <property type="protein sequence ID" value="CAA83654.1"/>
    <property type="molecule type" value="Genomic_DNA"/>
</dbReference>
<dbReference type="EMBL" id="Z21508">
    <property type="protein sequence ID" value="CAA79720.1"/>
    <property type="molecule type" value="Genomic_DNA"/>
</dbReference>
<dbReference type="PIR" id="S47047">
    <property type="entry name" value="S47047"/>
</dbReference>
<dbReference type="SMR" id="P37763"/>
<dbReference type="UniPathway" id="UPA00124"/>
<dbReference type="UniPathway" id="UPA00281"/>
<dbReference type="GO" id="GO:0005829">
    <property type="term" value="C:cytosol"/>
    <property type="evidence" value="ECO:0007669"/>
    <property type="project" value="TreeGrafter"/>
</dbReference>
<dbReference type="GO" id="GO:0008830">
    <property type="term" value="F:dTDP-4-dehydrorhamnose 3,5-epimerase activity"/>
    <property type="evidence" value="ECO:0000250"/>
    <property type="project" value="UniProtKB"/>
</dbReference>
<dbReference type="GO" id="GO:0019305">
    <property type="term" value="P:dTDP-rhamnose biosynthetic process"/>
    <property type="evidence" value="ECO:0007669"/>
    <property type="project" value="UniProtKB-UniPathway"/>
</dbReference>
<dbReference type="GO" id="GO:0009103">
    <property type="term" value="P:lipopolysaccharide biosynthetic process"/>
    <property type="evidence" value="ECO:0000250"/>
    <property type="project" value="UniProtKB"/>
</dbReference>
<dbReference type="GO" id="GO:0009243">
    <property type="term" value="P:O antigen biosynthetic process"/>
    <property type="evidence" value="ECO:0007669"/>
    <property type="project" value="UniProtKB-UniPathway"/>
</dbReference>
<dbReference type="GO" id="GO:0000271">
    <property type="term" value="P:polysaccharide biosynthetic process"/>
    <property type="evidence" value="ECO:0000250"/>
    <property type="project" value="UniProtKB"/>
</dbReference>
<dbReference type="CDD" id="cd00438">
    <property type="entry name" value="cupin_RmlC"/>
    <property type="match status" value="1"/>
</dbReference>
<dbReference type="Gene3D" id="2.60.120.10">
    <property type="entry name" value="Jelly Rolls"/>
    <property type="match status" value="1"/>
</dbReference>
<dbReference type="InterPro" id="IPR000888">
    <property type="entry name" value="RmlC-like"/>
</dbReference>
<dbReference type="InterPro" id="IPR014710">
    <property type="entry name" value="RmlC-like_jellyroll"/>
</dbReference>
<dbReference type="InterPro" id="IPR011051">
    <property type="entry name" value="RmlC_Cupin_sf"/>
</dbReference>
<dbReference type="NCBIfam" id="TIGR01221">
    <property type="entry name" value="rmlC"/>
    <property type="match status" value="1"/>
</dbReference>
<dbReference type="PANTHER" id="PTHR21047">
    <property type="entry name" value="DTDP-6-DEOXY-D-GLUCOSE-3,5 EPIMERASE"/>
    <property type="match status" value="1"/>
</dbReference>
<dbReference type="PANTHER" id="PTHR21047:SF2">
    <property type="entry name" value="THYMIDINE DIPHOSPHO-4-KETO-RHAMNOSE 3,5-EPIMERASE"/>
    <property type="match status" value="1"/>
</dbReference>
<dbReference type="Pfam" id="PF00908">
    <property type="entry name" value="dTDP_sugar_isom"/>
    <property type="match status" value="1"/>
</dbReference>
<dbReference type="SUPFAM" id="SSF51182">
    <property type="entry name" value="RmlC-like cupins"/>
    <property type="match status" value="1"/>
</dbReference>